<reference key="1">
    <citation type="submission" date="2007-06" db="EMBL/GenBank/DDBJ databases">
        <authorList>
            <person name="Dodson R.J."/>
            <person name="Harkins D."/>
            <person name="Paulsen I.T."/>
        </authorList>
    </citation>
    <scope>NUCLEOTIDE SEQUENCE [LARGE SCALE GENOMIC DNA]</scope>
    <source>
        <strain>DSM 24068 / PA7</strain>
    </source>
</reference>
<evidence type="ECO:0000255" key="1">
    <source>
        <dbReference type="HAMAP-Rule" id="MF_00737"/>
    </source>
</evidence>
<sequence length="311" mass="33986">MHPAPDMSLWQGRIDSQEGAGALRWHQWIRPYHESAGAASVLLGFASDEGVRRNQGRQGARQGPPALRRALANLAWHGEQALYDAGDIEAAEDLEGAQERYARRVAELLGRGHQVVGLGGGHEIAYASFSGLAHHLGRDGGTPRIGILNFDAHFDLRHAEQASSGTPFRQIAEHCEASGWPFAYCCLGVSRLSNTAALFDQAQRLGVRYLLDRQVQPWNLERSEAFLDSFLQSIEHLYLTVCLDVLPAAQAPGVSAPSAHGVEMSLVEHLVRRAKASGKLRLADIAELNPQFDNDQRTARIAARLVDALVN</sequence>
<proteinExistence type="inferred from homology"/>
<keyword id="KW-0369">Histidine metabolism</keyword>
<keyword id="KW-0378">Hydrolase</keyword>
<keyword id="KW-0464">Manganese</keyword>
<keyword id="KW-0479">Metal-binding</keyword>
<feature type="chain" id="PRO_1000046300" description="Formimidoylglutamase">
    <location>
        <begin position="1"/>
        <end position="311"/>
    </location>
</feature>
<feature type="binding site" evidence="1">
    <location>
        <position position="122"/>
    </location>
    <ligand>
        <name>Mn(2+)</name>
        <dbReference type="ChEBI" id="CHEBI:29035"/>
        <label>1</label>
    </ligand>
</feature>
<feature type="binding site" evidence="1">
    <location>
        <position position="151"/>
    </location>
    <ligand>
        <name>Mn(2+)</name>
        <dbReference type="ChEBI" id="CHEBI:29035"/>
        <label>1</label>
    </ligand>
</feature>
<feature type="binding site" evidence="1">
    <location>
        <position position="151"/>
    </location>
    <ligand>
        <name>Mn(2+)</name>
        <dbReference type="ChEBI" id="CHEBI:29035"/>
        <label>2</label>
    </ligand>
</feature>
<feature type="binding site" evidence="1">
    <location>
        <position position="153"/>
    </location>
    <ligand>
        <name>Mn(2+)</name>
        <dbReference type="ChEBI" id="CHEBI:29035"/>
        <label>2</label>
    </ligand>
</feature>
<feature type="binding site" evidence="1">
    <location>
        <position position="155"/>
    </location>
    <ligand>
        <name>Mn(2+)</name>
        <dbReference type="ChEBI" id="CHEBI:29035"/>
        <label>1</label>
    </ligand>
</feature>
<feature type="binding site" evidence="1">
    <location>
        <position position="242"/>
    </location>
    <ligand>
        <name>Mn(2+)</name>
        <dbReference type="ChEBI" id="CHEBI:29035"/>
        <label>1</label>
    </ligand>
</feature>
<feature type="binding site" evidence="1">
    <location>
        <position position="242"/>
    </location>
    <ligand>
        <name>Mn(2+)</name>
        <dbReference type="ChEBI" id="CHEBI:29035"/>
        <label>2</label>
    </ligand>
</feature>
<feature type="binding site" evidence="1">
    <location>
        <position position="244"/>
    </location>
    <ligand>
        <name>Mn(2+)</name>
        <dbReference type="ChEBI" id="CHEBI:29035"/>
        <label>2</label>
    </ligand>
</feature>
<name>HUTGL_PSEP7</name>
<dbReference type="EC" id="3.5.3.8" evidence="1"/>
<dbReference type="EMBL" id="CP000744">
    <property type="protein sequence ID" value="ABR81110.1"/>
    <property type="molecule type" value="Genomic_DNA"/>
</dbReference>
<dbReference type="RefSeq" id="WP_012075015.1">
    <property type="nucleotide sequence ID" value="NC_009656.1"/>
</dbReference>
<dbReference type="SMR" id="A6V2Q0"/>
<dbReference type="KEGG" id="pap:PSPA7_1954"/>
<dbReference type="HOGENOM" id="CLU_039478_2_0_6"/>
<dbReference type="UniPathway" id="UPA00379">
    <property type="reaction ID" value="UER00552"/>
</dbReference>
<dbReference type="Proteomes" id="UP000001582">
    <property type="component" value="Chromosome"/>
</dbReference>
<dbReference type="GO" id="GO:0008783">
    <property type="term" value="F:agmatinase activity"/>
    <property type="evidence" value="ECO:0007669"/>
    <property type="project" value="TreeGrafter"/>
</dbReference>
<dbReference type="GO" id="GO:0050415">
    <property type="term" value="F:formimidoylglutamase activity"/>
    <property type="evidence" value="ECO:0007669"/>
    <property type="project" value="UniProtKB-UniRule"/>
</dbReference>
<dbReference type="GO" id="GO:0030145">
    <property type="term" value="F:manganese ion binding"/>
    <property type="evidence" value="ECO:0007669"/>
    <property type="project" value="UniProtKB-UniRule"/>
</dbReference>
<dbReference type="GO" id="GO:0019556">
    <property type="term" value="P:L-histidine catabolic process to glutamate and formamide"/>
    <property type="evidence" value="ECO:0007669"/>
    <property type="project" value="UniProtKB-UniPathway"/>
</dbReference>
<dbReference type="GO" id="GO:0019557">
    <property type="term" value="P:L-histidine catabolic process to glutamate and formate"/>
    <property type="evidence" value="ECO:0007669"/>
    <property type="project" value="UniProtKB-UniPathway"/>
</dbReference>
<dbReference type="GO" id="GO:0033389">
    <property type="term" value="P:putrescine biosynthetic process from arginine, via agmatine"/>
    <property type="evidence" value="ECO:0007669"/>
    <property type="project" value="TreeGrafter"/>
</dbReference>
<dbReference type="CDD" id="cd09988">
    <property type="entry name" value="Formimidoylglutamase"/>
    <property type="match status" value="1"/>
</dbReference>
<dbReference type="Gene3D" id="3.40.800.10">
    <property type="entry name" value="Ureohydrolase domain"/>
    <property type="match status" value="1"/>
</dbReference>
<dbReference type="HAMAP" id="MF_00737">
    <property type="entry name" value="Formimidoylglutam"/>
    <property type="match status" value="1"/>
</dbReference>
<dbReference type="InterPro" id="IPR005923">
    <property type="entry name" value="HutG"/>
</dbReference>
<dbReference type="InterPro" id="IPR006035">
    <property type="entry name" value="Ureohydrolase"/>
</dbReference>
<dbReference type="InterPro" id="IPR023696">
    <property type="entry name" value="Ureohydrolase_dom_sf"/>
</dbReference>
<dbReference type="NCBIfam" id="TIGR01227">
    <property type="entry name" value="hutG"/>
    <property type="match status" value="1"/>
</dbReference>
<dbReference type="PANTHER" id="PTHR11358">
    <property type="entry name" value="ARGINASE/AGMATINASE"/>
    <property type="match status" value="1"/>
</dbReference>
<dbReference type="PANTHER" id="PTHR11358:SF35">
    <property type="entry name" value="FORMIMIDOYLGLUTAMASE"/>
    <property type="match status" value="1"/>
</dbReference>
<dbReference type="Pfam" id="PF00491">
    <property type="entry name" value="Arginase"/>
    <property type="match status" value="1"/>
</dbReference>
<dbReference type="PIRSF" id="PIRSF036979">
    <property type="entry name" value="Arginase"/>
    <property type="match status" value="1"/>
</dbReference>
<dbReference type="SUPFAM" id="SSF52768">
    <property type="entry name" value="Arginase/deacetylase"/>
    <property type="match status" value="1"/>
</dbReference>
<dbReference type="PROSITE" id="PS51409">
    <property type="entry name" value="ARGINASE_2"/>
    <property type="match status" value="1"/>
</dbReference>
<protein>
    <recommendedName>
        <fullName evidence="1">Formimidoylglutamase</fullName>
        <ecNumber evidence="1">3.5.3.8</ecNumber>
    </recommendedName>
    <alternativeName>
        <fullName evidence="1">Formiminoglutamase</fullName>
    </alternativeName>
    <alternativeName>
        <fullName evidence="1">Formiminoglutamate hydrolase</fullName>
    </alternativeName>
</protein>
<accession>A6V2Q0</accession>
<gene>
    <name type="ordered locus">PSPA7_1954</name>
</gene>
<organism>
    <name type="scientific">Pseudomonas paraeruginosa (strain DSM 24068 / PA7)</name>
    <name type="common">Pseudomonas aeruginosa (strain PA7)</name>
    <dbReference type="NCBI Taxonomy" id="381754"/>
    <lineage>
        <taxon>Bacteria</taxon>
        <taxon>Pseudomonadati</taxon>
        <taxon>Pseudomonadota</taxon>
        <taxon>Gammaproteobacteria</taxon>
        <taxon>Pseudomonadales</taxon>
        <taxon>Pseudomonadaceae</taxon>
        <taxon>Pseudomonas</taxon>
        <taxon>Pseudomonas paraeruginosa</taxon>
    </lineage>
</organism>
<comment type="function">
    <text evidence="1">Catalyzes the conversion of N-formimidoyl-L-glutamate to L-glutamate and formamide.</text>
</comment>
<comment type="catalytic activity">
    <reaction evidence="1">
        <text>N-formimidoyl-L-glutamate + H2O = formamide + L-glutamate</text>
        <dbReference type="Rhea" id="RHEA:22492"/>
        <dbReference type="ChEBI" id="CHEBI:15377"/>
        <dbReference type="ChEBI" id="CHEBI:16397"/>
        <dbReference type="ChEBI" id="CHEBI:29985"/>
        <dbReference type="ChEBI" id="CHEBI:58928"/>
        <dbReference type="EC" id="3.5.3.8"/>
    </reaction>
</comment>
<comment type="cofactor">
    <cofactor evidence="1">
        <name>Mn(2+)</name>
        <dbReference type="ChEBI" id="CHEBI:29035"/>
    </cofactor>
    <text evidence="1">Binds 2 manganese ions per subunit.</text>
</comment>
<comment type="pathway">
    <text evidence="1">Amino-acid degradation; L-histidine degradation into L-glutamate; L-glutamate from N-formimidoyl-L-glutamate (hydrolase route): step 1/1.</text>
</comment>
<comment type="similarity">
    <text evidence="1">Belongs to the arginase family.</text>
</comment>